<comment type="function">
    <text evidence="3">Structural component of the virion that acts as a cement protein on the capsid exterior which mediates the interactions between the hexons, including the peripentonal hexons, and reaches all the way to the penton vertices. Two hexon linking proteins IIIa, one from each facet, stabilize the unique edge interface between a pair of facets. As the virus enters the host cell, hexon linking proteins IIIa are shed concomitant with virion acidification in the endosome. During virus assembly, seems to play a role in the serotype specificity of the packaging of viral DNA via its interaction with packaging protein 3.</text>
</comment>
<comment type="subunit">
    <text evidence="2 3">Interacts with hexon proteins; this interaction tethers the peripentonal hexons to hexons situated in the facet. Interacts with the penton protein (via N-terminus). Interacts with packaging protein 3; this interaction is required to promote correct genome packaging.</text>
</comment>
<comment type="subcellular location">
    <subcellularLocation>
        <location evidence="3">Virion</location>
    </subcellularLocation>
    <subcellularLocation>
        <location evidence="3">Host nucleus</location>
    </subcellularLocation>
    <text evidence="3">Surrounds the border of each facet on the capsid exterior. Present in around 60 copies per virion.</text>
</comment>
<comment type="induction">
    <text evidence="3">Expressed in the late phase of the viral replicative cycle.</text>
</comment>
<comment type="PTM">
    <text evidence="1 3">Cleaved near the C-terminus by the viral protease during virion maturation to form the mature protein.</text>
</comment>
<comment type="miscellaneous">
    <text evidence="3">All late proteins expressed from the major late promoter are produced by alternative splicing and alternative polyadenylation of the same gene giving rise to non-overlapping ORFs. A leader sequence is present in the N-terminus of all these mRNAs and is recognized by the viral shutoff protein to provide expression although conventional translation via ribosome scanning from the cap has been shut off in the host cell.</text>
</comment>
<comment type="similarity">
    <text evidence="3 5">Belongs to the adenoviridae hexon-linking protein IIIa family.</text>
</comment>
<evidence type="ECO:0000250" key="1">
    <source>
        <dbReference type="UniProtKB" id="P03279"/>
    </source>
</evidence>
<evidence type="ECO:0000250" key="2">
    <source>
        <dbReference type="UniProtKB" id="P12537"/>
    </source>
</evidence>
<evidence type="ECO:0000255" key="3">
    <source>
        <dbReference type="HAMAP-Rule" id="MF_04047"/>
    </source>
</evidence>
<evidence type="ECO:0000256" key="4">
    <source>
        <dbReference type="SAM" id="MobiDB-lite"/>
    </source>
</evidence>
<evidence type="ECO:0000305" key="5"/>
<organism>
    <name type="scientific">Human adenovirus A serotype 12</name>
    <name type="common">HAdV-12</name>
    <name type="synonym">Human adenovirus 12</name>
    <dbReference type="NCBI Taxonomy" id="28282"/>
    <lineage>
        <taxon>Viruses</taxon>
        <taxon>Varidnaviria</taxon>
        <taxon>Bamfordvirae</taxon>
        <taxon>Preplasmiviricota</taxon>
        <taxon>Tectiliviricetes</taxon>
        <taxon>Rowavirales</taxon>
        <taxon>Adenoviridae</taxon>
        <taxon>Mastadenovirus</taxon>
        <taxon>Human mastadenovirus A</taxon>
    </lineage>
</organism>
<gene>
    <name type="ORF">L1</name>
</gene>
<sequence>MQRPAIIAERAPNLDPAVLAAMQSQPSGVTASDDWTAAMDRIMALTARSPDAFRQQPQANRFSAILEAVVPSRTNPTHEKVLTIVNALLDSKAIRKDEAGLIYNALLERVARYNSTNVQANLDRMGTDVKEALAQRERFHRDGNLGSLVALNAFLSTQPANVPRGQEDYTNFISALRLMVTEVPQSEVYQSGPDYFFQTSRQGLQTVNLTQAFKNLQGLWGVRAPVGDRSTLSSLLTPNSRLLLLLIAPFTNTNSLSRDSYLGHLVTLYREAIGQAQVDEQTYQEITSVSRALGQEDTGSLEATLNFLLTNRRQQVPPQYTLNAEEERILRYVQQSVSLYLMREGATPSAALDMTARNMEPSFYASNRAFINRLMDYLHRAAAMNGEYFTNAILNPHWLPPPGFYTGEFDLPEGNDGFLWDDVTDSLFSPAVIGHHGKKEAGDEGPLLDSRASSPFPSLTSLPASVNSGRTTRPRLTGESEYLNDPILFPVRDKNFPNNGIESLVDKMSRWKTYAQERREWEERQPRPVRPPRQRWQRRKKGAHAGDEGSDDSADDSSVLDLGGSGNPFAHLRPQGCIGSLY</sequence>
<keyword id="KW-1232">Capsid decoration protein</keyword>
<keyword id="KW-0167">Capsid protein</keyword>
<keyword id="KW-0903">Direct protein sequencing</keyword>
<keyword id="KW-1048">Host nucleus</keyword>
<keyword id="KW-0426">Late protein</keyword>
<keyword id="KW-0597">Phosphoprotein</keyword>
<keyword id="KW-1185">Reference proteome</keyword>
<keyword id="KW-0231">Viral genome packaging</keyword>
<keyword id="KW-1188">Viral release from host cell</keyword>
<keyword id="KW-0946">Virion</keyword>
<feature type="chain" id="PRO_0000221836" description="Pre-hexon-linking protein IIIa" evidence="3">
    <location>
        <begin position="1"/>
        <end position="582"/>
    </location>
</feature>
<feature type="chain" id="PRO_0000421388" description="Hexon-linking protein IIIa" evidence="3">
    <location>
        <begin position="1"/>
        <end position="565"/>
    </location>
</feature>
<feature type="propeptide" id="PRO_0000421387" evidence="1 3">
    <location>
        <begin position="566"/>
        <end position="582"/>
    </location>
</feature>
<feature type="region of interest" description="Peripentonal hexon-tethering domain" evidence="3">
    <location>
        <begin position="1"/>
        <end position="114"/>
    </location>
</feature>
<feature type="region of interest" description="Binding to hexon-linking protein" evidence="3">
    <location>
        <begin position="146"/>
        <end position="259"/>
    </location>
</feature>
<feature type="region of interest" description="Disordered" evidence="4">
    <location>
        <begin position="437"/>
        <end position="479"/>
    </location>
</feature>
<feature type="region of interest" description="Disordered" evidence="4">
    <location>
        <begin position="517"/>
        <end position="582"/>
    </location>
</feature>
<feature type="compositionally biased region" description="Polar residues" evidence="4">
    <location>
        <begin position="451"/>
        <end position="471"/>
    </location>
</feature>
<feature type="compositionally biased region" description="Basic and acidic residues" evidence="4">
    <location>
        <begin position="517"/>
        <end position="526"/>
    </location>
</feature>
<feature type="compositionally biased region" description="Basic residues" evidence="4">
    <location>
        <begin position="530"/>
        <end position="543"/>
    </location>
</feature>
<feature type="site" description="Cleavage; by viral protease" evidence="1 3">
    <location>
        <begin position="565"/>
        <end position="566"/>
    </location>
</feature>
<feature type="modified residue" description="Phosphoserine; by host" evidence="3">
    <location>
        <position position="233"/>
    </location>
</feature>
<feature type="modified residue" description="Phosphothreonine; by host" evidence="3">
    <location>
        <position position="282"/>
    </location>
</feature>
<feature type="modified residue" description="Phosphoserine; by host" evidence="3">
    <location>
        <position position="458"/>
    </location>
</feature>
<feature type="modified residue" description="Phosphoserine; by host" evidence="3">
    <location>
        <position position="465"/>
    </location>
</feature>
<feature type="modified residue" description="Phosphotyrosine; by host" evidence="3">
    <location>
        <position position="482"/>
    </location>
</feature>
<feature type="modified residue" description="Phosphoserine; by host" evidence="3">
    <location>
        <position position="503"/>
    </location>
</feature>
<accession>P36712</accession>
<name>CAP3_ADE12</name>
<dbReference type="EMBL" id="X73487">
    <property type="protein sequence ID" value="CAA51886.1"/>
    <property type="molecule type" value="Genomic_DNA"/>
</dbReference>
<dbReference type="PIR" id="S33937">
    <property type="entry name" value="S33937"/>
</dbReference>
<dbReference type="RefSeq" id="NP_040919.1">
    <property type="nucleotide sequence ID" value="NC_001460.1"/>
</dbReference>
<dbReference type="SMR" id="P36712"/>
<dbReference type="GeneID" id="1460848"/>
<dbReference type="KEGG" id="vg:1460848"/>
<dbReference type="Proteomes" id="UP000004993">
    <property type="component" value="Genome"/>
</dbReference>
<dbReference type="GO" id="GO:0042025">
    <property type="term" value="C:host cell nucleus"/>
    <property type="evidence" value="ECO:0007669"/>
    <property type="project" value="UniProtKB-SubCell"/>
</dbReference>
<dbReference type="GO" id="GO:0098021">
    <property type="term" value="C:viral capsid, decoration"/>
    <property type="evidence" value="ECO:0007669"/>
    <property type="project" value="UniProtKB-UniRule"/>
</dbReference>
<dbReference type="Gene3D" id="1.20.120.1500">
    <property type="entry name" value="Pre-hexon-linking protein IIIa"/>
    <property type="match status" value="1"/>
</dbReference>
<dbReference type="HAMAP" id="MF_04047">
    <property type="entry name" value="ADV_CAP3"/>
    <property type="match status" value="1"/>
</dbReference>
<dbReference type="InterPro" id="IPR003479">
    <property type="entry name" value="Hex_IIIa"/>
</dbReference>
<dbReference type="InterPro" id="IPR043053">
    <property type="entry name" value="Hex_IIIa_N"/>
</dbReference>
<dbReference type="Pfam" id="PF02455">
    <property type="entry name" value="Hex_IIIa"/>
    <property type="match status" value="1"/>
</dbReference>
<proteinExistence type="evidence at protein level"/>
<organismHost>
    <name type="scientific">Homo sapiens</name>
    <name type="common">Human</name>
    <dbReference type="NCBI Taxonomy" id="9606"/>
</organismHost>
<reference key="1">
    <citation type="journal article" date="1994" name="J. Virol.">
        <title>Nucleotide sequence of human adenovirus type 12 DNA: comparative functional analysis.</title>
        <authorList>
            <person name="Sprengel J."/>
            <person name="Schmitz B."/>
            <person name="Heuss-Neitzel D."/>
            <person name="Zock C."/>
            <person name="Doerfler W."/>
        </authorList>
    </citation>
    <scope>NUCLEOTIDE SEQUENCE [LARGE SCALE GENOMIC DNA]</scope>
</reference>
<reference key="2">
    <citation type="journal article" date="1993" name="Virology">
        <title>Human adenovirus serotype 12 virion precursors pMu and pVI are cleaved at amino-terminal and carboxy-terminal sites that conform to the adenovirus 2 endoproteinase cleavage consensus sequence.</title>
        <authorList>
            <person name="Freimuth P."/>
            <person name="Anderson C.W."/>
        </authorList>
    </citation>
    <scope>PROTEIN SEQUENCE OF 566-576</scope>
    <source>
        <strain>Huie</strain>
    </source>
</reference>
<protein>
    <recommendedName>
        <fullName evidence="3">Pre-hexon-linking protein IIIa</fullName>
    </recommendedName>
    <alternativeName>
        <fullName evidence="3">Capsid vertex-specific component IIIa</fullName>
        <shortName evidence="3">CVSC</shortName>
    </alternativeName>
    <alternativeName>
        <fullName evidence="3">Protein IIIa</fullName>
    </alternativeName>
    <alternativeName>
        <fullName evidence="3">pIIIa</fullName>
    </alternativeName>
    <component>
        <recommendedName>
            <fullName evidence="3">Hexon-linking protein IIIa</fullName>
        </recommendedName>
    </component>
</protein>